<gene>
    <name evidence="1" type="primary">efp</name>
    <name type="ordered locus">Dtur_1037</name>
</gene>
<keyword id="KW-0963">Cytoplasm</keyword>
<keyword id="KW-0251">Elongation factor</keyword>
<keyword id="KW-0648">Protein biosynthesis</keyword>
<keyword id="KW-1185">Reference proteome</keyword>
<evidence type="ECO:0000255" key="1">
    <source>
        <dbReference type="HAMAP-Rule" id="MF_00141"/>
    </source>
</evidence>
<reference key="1">
    <citation type="journal article" date="2016" name="Front. Microbiol.">
        <title>The complete genome sequence of hyperthermophile Dictyoglomus turgidum DSM 6724 reveals a specialized carbohydrate fermentor.</title>
        <authorList>
            <person name="Brumm P.J."/>
            <person name="Gowda K."/>
            <person name="Robb F.T."/>
            <person name="Mead D.A."/>
        </authorList>
    </citation>
    <scope>NUCLEOTIDE SEQUENCE [LARGE SCALE GENOMIC DNA]</scope>
    <source>
        <strain>DSM 6724 / Z-1310</strain>
    </source>
</reference>
<name>EFP_DICTD</name>
<organism>
    <name type="scientific">Dictyoglomus turgidum (strain DSM 6724 / Z-1310)</name>
    <dbReference type="NCBI Taxonomy" id="515635"/>
    <lineage>
        <taxon>Bacteria</taxon>
        <taxon>Pseudomonadati</taxon>
        <taxon>Dictyoglomota</taxon>
        <taxon>Dictyoglomia</taxon>
        <taxon>Dictyoglomales</taxon>
        <taxon>Dictyoglomaceae</taxon>
        <taxon>Dictyoglomus</taxon>
    </lineage>
</organism>
<proteinExistence type="inferred from homology"/>
<sequence length="185" mass="20968">MISVNDFYPGLTIELEGEIYIVLEYQHVHMAQGQATVRVKLKNLKTGNVIRKTFKSDEYVPQAFINKREAEYLYKQGDEYYFIDNESFEQYILTEEQLGDAIKYLKEGNTVSVLFYEGNPIGIELPTTVVLEVVETDPGLRGDTVSGGSKPAKLETGLVIQVPLFIQIGDKVVVDTRYAKYVERA</sequence>
<protein>
    <recommendedName>
        <fullName evidence="1">Elongation factor P</fullName>
        <shortName evidence="1">EF-P</shortName>
    </recommendedName>
</protein>
<comment type="function">
    <text evidence="1">Involved in peptide bond synthesis. Stimulates efficient translation and peptide-bond synthesis on native or reconstituted 70S ribosomes in vitro. Probably functions indirectly by altering the affinity of the ribosome for aminoacyl-tRNA, thus increasing their reactivity as acceptors for peptidyl transferase.</text>
</comment>
<comment type="pathway">
    <text evidence="1">Protein biosynthesis; polypeptide chain elongation.</text>
</comment>
<comment type="subcellular location">
    <subcellularLocation>
        <location evidence="1">Cytoplasm</location>
    </subcellularLocation>
</comment>
<comment type="similarity">
    <text evidence="1">Belongs to the elongation factor P family.</text>
</comment>
<feature type="chain" id="PRO_1000117894" description="Elongation factor P">
    <location>
        <begin position="1"/>
        <end position="185"/>
    </location>
</feature>
<dbReference type="EMBL" id="CP001251">
    <property type="protein sequence ID" value="ACK42317.1"/>
    <property type="molecule type" value="Genomic_DNA"/>
</dbReference>
<dbReference type="RefSeq" id="WP_012583400.1">
    <property type="nucleotide sequence ID" value="NC_011661.1"/>
</dbReference>
<dbReference type="RefSeq" id="YP_002352931.1">
    <property type="nucleotide sequence ID" value="NC_011661.1"/>
</dbReference>
<dbReference type="SMR" id="B8E240"/>
<dbReference type="FunCoup" id="B8E240">
    <property type="interactions" value="405"/>
</dbReference>
<dbReference type="STRING" id="515635.Dtur_1037"/>
<dbReference type="EnsemblBacteria" id="ACK42317">
    <property type="protein sequence ID" value="ACK42317"/>
    <property type="gene ID" value="Dtur_1037"/>
</dbReference>
<dbReference type="KEGG" id="dtu:Dtur_1037"/>
<dbReference type="PATRIC" id="fig|515635.4.peg.1074"/>
<dbReference type="eggNOG" id="COG0231">
    <property type="taxonomic scope" value="Bacteria"/>
</dbReference>
<dbReference type="HOGENOM" id="CLU_074944_0_1_0"/>
<dbReference type="InParanoid" id="B8E240"/>
<dbReference type="OrthoDB" id="9801844at2"/>
<dbReference type="UniPathway" id="UPA00345"/>
<dbReference type="Proteomes" id="UP000007719">
    <property type="component" value="Chromosome"/>
</dbReference>
<dbReference type="GO" id="GO:0005737">
    <property type="term" value="C:cytoplasm"/>
    <property type="evidence" value="ECO:0000318"/>
    <property type="project" value="GO_Central"/>
</dbReference>
<dbReference type="GO" id="GO:0003746">
    <property type="term" value="F:translation elongation factor activity"/>
    <property type="evidence" value="ECO:0000318"/>
    <property type="project" value="GO_Central"/>
</dbReference>
<dbReference type="GO" id="GO:0043043">
    <property type="term" value="P:peptide biosynthetic process"/>
    <property type="evidence" value="ECO:0007669"/>
    <property type="project" value="InterPro"/>
</dbReference>
<dbReference type="CDD" id="cd04470">
    <property type="entry name" value="S1_EF-P_repeat_1"/>
    <property type="match status" value="1"/>
</dbReference>
<dbReference type="CDD" id="cd05794">
    <property type="entry name" value="S1_EF-P_repeat_2"/>
    <property type="match status" value="1"/>
</dbReference>
<dbReference type="FunFam" id="2.30.30.30:FF:000003">
    <property type="entry name" value="Elongation factor P"/>
    <property type="match status" value="1"/>
</dbReference>
<dbReference type="FunFam" id="2.40.50.140:FF:000004">
    <property type="entry name" value="Elongation factor P"/>
    <property type="match status" value="1"/>
</dbReference>
<dbReference type="FunFam" id="2.40.50.140:FF:000009">
    <property type="entry name" value="Elongation factor P"/>
    <property type="match status" value="1"/>
</dbReference>
<dbReference type="Gene3D" id="2.30.30.30">
    <property type="match status" value="1"/>
</dbReference>
<dbReference type="Gene3D" id="2.40.50.140">
    <property type="entry name" value="Nucleic acid-binding proteins"/>
    <property type="match status" value="2"/>
</dbReference>
<dbReference type="HAMAP" id="MF_00141">
    <property type="entry name" value="EF_P"/>
    <property type="match status" value="1"/>
</dbReference>
<dbReference type="InterPro" id="IPR015365">
    <property type="entry name" value="Elong-fact-P_C"/>
</dbReference>
<dbReference type="InterPro" id="IPR012340">
    <property type="entry name" value="NA-bd_OB-fold"/>
</dbReference>
<dbReference type="InterPro" id="IPR014722">
    <property type="entry name" value="Rib_uL2_dom2"/>
</dbReference>
<dbReference type="InterPro" id="IPR020599">
    <property type="entry name" value="Transl_elong_fac_P/YeiP"/>
</dbReference>
<dbReference type="InterPro" id="IPR013185">
    <property type="entry name" value="Transl_elong_KOW-like"/>
</dbReference>
<dbReference type="InterPro" id="IPR001059">
    <property type="entry name" value="Transl_elong_P/YeiP_cen"/>
</dbReference>
<dbReference type="InterPro" id="IPR013852">
    <property type="entry name" value="Transl_elong_P/YeiP_CS"/>
</dbReference>
<dbReference type="InterPro" id="IPR011768">
    <property type="entry name" value="Transl_elongation_fac_P"/>
</dbReference>
<dbReference type="InterPro" id="IPR008991">
    <property type="entry name" value="Translation_prot_SH3-like_sf"/>
</dbReference>
<dbReference type="NCBIfam" id="TIGR00038">
    <property type="entry name" value="efp"/>
    <property type="match status" value="1"/>
</dbReference>
<dbReference type="NCBIfam" id="NF001810">
    <property type="entry name" value="PRK00529.1"/>
    <property type="match status" value="1"/>
</dbReference>
<dbReference type="PANTHER" id="PTHR30053">
    <property type="entry name" value="ELONGATION FACTOR P"/>
    <property type="match status" value="1"/>
</dbReference>
<dbReference type="PANTHER" id="PTHR30053:SF12">
    <property type="entry name" value="ELONGATION FACTOR P (EF-P) FAMILY PROTEIN"/>
    <property type="match status" value="1"/>
</dbReference>
<dbReference type="Pfam" id="PF01132">
    <property type="entry name" value="EFP"/>
    <property type="match status" value="1"/>
</dbReference>
<dbReference type="Pfam" id="PF08207">
    <property type="entry name" value="EFP_N"/>
    <property type="match status" value="1"/>
</dbReference>
<dbReference type="Pfam" id="PF09285">
    <property type="entry name" value="Elong-fact-P_C"/>
    <property type="match status" value="1"/>
</dbReference>
<dbReference type="PIRSF" id="PIRSF005901">
    <property type="entry name" value="EF-P"/>
    <property type="match status" value="1"/>
</dbReference>
<dbReference type="SMART" id="SM01185">
    <property type="entry name" value="EFP"/>
    <property type="match status" value="1"/>
</dbReference>
<dbReference type="SMART" id="SM00841">
    <property type="entry name" value="Elong-fact-P_C"/>
    <property type="match status" value="1"/>
</dbReference>
<dbReference type="SUPFAM" id="SSF50249">
    <property type="entry name" value="Nucleic acid-binding proteins"/>
    <property type="match status" value="2"/>
</dbReference>
<dbReference type="SUPFAM" id="SSF50104">
    <property type="entry name" value="Translation proteins SH3-like domain"/>
    <property type="match status" value="1"/>
</dbReference>
<dbReference type="PROSITE" id="PS01275">
    <property type="entry name" value="EFP"/>
    <property type="match status" value="1"/>
</dbReference>
<accession>B8E240</accession>